<dbReference type="EC" id="2.3.1.234" evidence="1"/>
<dbReference type="EMBL" id="AM181176">
    <property type="protein sequence ID" value="CAY52868.1"/>
    <property type="molecule type" value="Genomic_DNA"/>
</dbReference>
<dbReference type="RefSeq" id="WP_015886185.1">
    <property type="nucleotide sequence ID" value="NC_012660.1"/>
</dbReference>
<dbReference type="SMR" id="C3K338"/>
<dbReference type="STRING" id="294.SRM1_05249"/>
<dbReference type="GeneID" id="93467220"/>
<dbReference type="PATRIC" id="fig|216595.4.peg.5713"/>
<dbReference type="eggNOG" id="COG0533">
    <property type="taxonomic scope" value="Bacteria"/>
</dbReference>
<dbReference type="HOGENOM" id="CLU_023208_0_0_6"/>
<dbReference type="OrthoDB" id="9806197at2"/>
<dbReference type="GO" id="GO:0005737">
    <property type="term" value="C:cytoplasm"/>
    <property type="evidence" value="ECO:0007669"/>
    <property type="project" value="UniProtKB-SubCell"/>
</dbReference>
<dbReference type="GO" id="GO:0005506">
    <property type="term" value="F:iron ion binding"/>
    <property type="evidence" value="ECO:0007669"/>
    <property type="project" value="UniProtKB-UniRule"/>
</dbReference>
<dbReference type="GO" id="GO:0061711">
    <property type="term" value="F:N(6)-L-threonylcarbamoyladenine synthase activity"/>
    <property type="evidence" value="ECO:0007669"/>
    <property type="project" value="UniProtKB-EC"/>
</dbReference>
<dbReference type="GO" id="GO:0002949">
    <property type="term" value="P:tRNA threonylcarbamoyladenosine modification"/>
    <property type="evidence" value="ECO:0007669"/>
    <property type="project" value="UniProtKB-UniRule"/>
</dbReference>
<dbReference type="CDD" id="cd24133">
    <property type="entry name" value="ASKHA_NBD_TsaD_bac"/>
    <property type="match status" value="1"/>
</dbReference>
<dbReference type="FunFam" id="3.30.420.40:FF:000012">
    <property type="entry name" value="tRNA N6-adenosine threonylcarbamoyltransferase"/>
    <property type="match status" value="1"/>
</dbReference>
<dbReference type="FunFam" id="3.30.420.40:FF:000031">
    <property type="entry name" value="tRNA N6-adenosine threonylcarbamoyltransferase"/>
    <property type="match status" value="1"/>
</dbReference>
<dbReference type="Gene3D" id="3.30.420.40">
    <property type="match status" value="2"/>
</dbReference>
<dbReference type="HAMAP" id="MF_01445">
    <property type="entry name" value="TsaD"/>
    <property type="match status" value="1"/>
</dbReference>
<dbReference type="InterPro" id="IPR043129">
    <property type="entry name" value="ATPase_NBD"/>
</dbReference>
<dbReference type="InterPro" id="IPR000905">
    <property type="entry name" value="Gcp-like_dom"/>
</dbReference>
<dbReference type="InterPro" id="IPR017861">
    <property type="entry name" value="KAE1/TsaD"/>
</dbReference>
<dbReference type="InterPro" id="IPR022450">
    <property type="entry name" value="TsaD"/>
</dbReference>
<dbReference type="NCBIfam" id="TIGR00329">
    <property type="entry name" value="gcp_kae1"/>
    <property type="match status" value="1"/>
</dbReference>
<dbReference type="NCBIfam" id="TIGR03723">
    <property type="entry name" value="T6A_TsaD_YgjD"/>
    <property type="match status" value="1"/>
</dbReference>
<dbReference type="PANTHER" id="PTHR11735">
    <property type="entry name" value="TRNA N6-ADENOSINE THREONYLCARBAMOYLTRANSFERASE"/>
    <property type="match status" value="1"/>
</dbReference>
<dbReference type="PANTHER" id="PTHR11735:SF6">
    <property type="entry name" value="TRNA N6-ADENOSINE THREONYLCARBAMOYLTRANSFERASE, MITOCHONDRIAL"/>
    <property type="match status" value="1"/>
</dbReference>
<dbReference type="Pfam" id="PF00814">
    <property type="entry name" value="TsaD"/>
    <property type="match status" value="1"/>
</dbReference>
<dbReference type="PRINTS" id="PR00789">
    <property type="entry name" value="OSIALOPTASE"/>
</dbReference>
<dbReference type="SUPFAM" id="SSF53067">
    <property type="entry name" value="Actin-like ATPase domain"/>
    <property type="match status" value="2"/>
</dbReference>
<evidence type="ECO:0000255" key="1">
    <source>
        <dbReference type="HAMAP-Rule" id="MF_01445"/>
    </source>
</evidence>
<comment type="function">
    <text evidence="1">Required for the formation of a threonylcarbamoyl group on adenosine at position 37 (t(6)A37) in tRNAs that read codons beginning with adenine. Is involved in the transfer of the threonylcarbamoyl moiety of threonylcarbamoyl-AMP (TC-AMP) to the N6 group of A37, together with TsaE and TsaB. TsaD likely plays a direct catalytic role in this reaction.</text>
</comment>
<comment type="catalytic activity">
    <reaction evidence="1">
        <text>L-threonylcarbamoyladenylate + adenosine(37) in tRNA = N(6)-L-threonylcarbamoyladenosine(37) in tRNA + AMP + H(+)</text>
        <dbReference type="Rhea" id="RHEA:37059"/>
        <dbReference type="Rhea" id="RHEA-COMP:10162"/>
        <dbReference type="Rhea" id="RHEA-COMP:10163"/>
        <dbReference type="ChEBI" id="CHEBI:15378"/>
        <dbReference type="ChEBI" id="CHEBI:73682"/>
        <dbReference type="ChEBI" id="CHEBI:74411"/>
        <dbReference type="ChEBI" id="CHEBI:74418"/>
        <dbReference type="ChEBI" id="CHEBI:456215"/>
        <dbReference type="EC" id="2.3.1.234"/>
    </reaction>
</comment>
<comment type="cofactor">
    <cofactor evidence="1">
        <name>Fe(2+)</name>
        <dbReference type="ChEBI" id="CHEBI:29033"/>
    </cofactor>
    <text evidence="1">Binds 1 Fe(2+) ion per subunit.</text>
</comment>
<comment type="subcellular location">
    <subcellularLocation>
        <location evidence="1">Cytoplasm</location>
    </subcellularLocation>
</comment>
<comment type="similarity">
    <text evidence="1">Belongs to the KAE1 / TsaD family.</text>
</comment>
<proteinExistence type="inferred from homology"/>
<keyword id="KW-0012">Acyltransferase</keyword>
<keyword id="KW-0963">Cytoplasm</keyword>
<keyword id="KW-0408">Iron</keyword>
<keyword id="KW-0479">Metal-binding</keyword>
<keyword id="KW-0808">Transferase</keyword>
<keyword id="KW-0819">tRNA processing</keyword>
<name>TSAD_PSEFS</name>
<accession>C3K338</accession>
<sequence length="341" mass="36395">MLVLGLETSCDETGVALYDSERGLLADALFSQIDLHRAYGGVVPELASRDHVKRMLPLIRQVLDEAGCVPTEIDAIAYTAGPGLVGALLVGASCAQALAFAWGIPALGVHHMEGHLLAPMLEKTPPQFPFVALLVSGGHTQLVQVDGIGQYTLLGESLDDAAGEAFDKTAKMMGLNYPGGPEIARLAEKGVAGRYTFPRPMCDRPGLMFSFSGLKTSALNTWQQSVSAGDDSEQARCDIALAFQQAVVETLTIKCKRALKQAGMKRLVIAGGVSANKALRTSLEKMLGDMKGDVFYARPEFCTDNGAMIAYAGCQRLQAGQHESLAISVQARWPMEQLSPL</sequence>
<feature type="chain" id="PRO_1000215306" description="tRNA N6-adenosine threonylcarbamoyltransferase">
    <location>
        <begin position="1"/>
        <end position="341"/>
    </location>
</feature>
<feature type="binding site" evidence="1">
    <location>
        <position position="111"/>
    </location>
    <ligand>
        <name>Fe cation</name>
        <dbReference type="ChEBI" id="CHEBI:24875"/>
    </ligand>
</feature>
<feature type="binding site" evidence="1">
    <location>
        <position position="115"/>
    </location>
    <ligand>
        <name>Fe cation</name>
        <dbReference type="ChEBI" id="CHEBI:24875"/>
    </ligand>
</feature>
<feature type="binding site" evidence="1">
    <location>
        <begin position="134"/>
        <end position="138"/>
    </location>
    <ligand>
        <name>substrate</name>
    </ligand>
</feature>
<feature type="binding site" evidence="1">
    <location>
        <position position="167"/>
    </location>
    <ligand>
        <name>substrate</name>
    </ligand>
</feature>
<feature type="binding site" evidence="1">
    <location>
        <position position="180"/>
    </location>
    <ligand>
        <name>substrate</name>
    </ligand>
</feature>
<feature type="binding site" evidence="1">
    <location>
        <position position="276"/>
    </location>
    <ligand>
        <name>substrate</name>
    </ligand>
</feature>
<feature type="binding site" evidence="1">
    <location>
        <position position="304"/>
    </location>
    <ligand>
        <name>Fe cation</name>
        <dbReference type="ChEBI" id="CHEBI:24875"/>
    </ligand>
</feature>
<organism>
    <name type="scientific">Pseudomonas fluorescens (strain SBW25)</name>
    <dbReference type="NCBI Taxonomy" id="216595"/>
    <lineage>
        <taxon>Bacteria</taxon>
        <taxon>Pseudomonadati</taxon>
        <taxon>Pseudomonadota</taxon>
        <taxon>Gammaproteobacteria</taxon>
        <taxon>Pseudomonadales</taxon>
        <taxon>Pseudomonadaceae</taxon>
        <taxon>Pseudomonas</taxon>
    </lineage>
</organism>
<reference key="1">
    <citation type="journal article" date="2009" name="Genome Biol.">
        <title>Genomic and genetic analyses of diversity and plant interactions of Pseudomonas fluorescens.</title>
        <authorList>
            <person name="Silby M.W."/>
            <person name="Cerdeno-Tarraga A.M."/>
            <person name="Vernikos G.S."/>
            <person name="Giddens S.R."/>
            <person name="Jackson R.W."/>
            <person name="Preston G.M."/>
            <person name="Zhang X.-X."/>
            <person name="Moon C.D."/>
            <person name="Gehrig S.M."/>
            <person name="Godfrey S.A.C."/>
            <person name="Knight C.G."/>
            <person name="Malone J.G."/>
            <person name="Robinson Z."/>
            <person name="Spiers A.J."/>
            <person name="Harris S."/>
            <person name="Challis G.L."/>
            <person name="Yaxley A.M."/>
            <person name="Harris D."/>
            <person name="Seeger K."/>
            <person name="Murphy L."/>
            <person name="Rutter S."/>
            <person name="Squares R."/>
            <person name="Quail M.A."/>
            <person name="Saunders E."/>
            <person name="Mavromatis K."/>
            <person name="Brettin T.S."/>
            <person name="Bentley S.D."/>
            <person name="Hothersall J."/>
            <person name="Stephens E."/>
            <person name="Thomas C.M."/>
            <person name="Parkhill J."/>
            <person name="Levy S.B."/>
            <person name="Rainey P.B."/>
            <person name="Thomson N.R."/>
        </authorList>
    </citation>
    <scope>NUCLEOTIDE SEQUENCE [LARGE SCALE GENOMIC DNA]</scope>
    <source>
        <strain>SBW25</strain>
    </source>
</reference>
<gene>
    <name evidence="1" type="primary">tsaD</name>
    <name type="synonym">gcp</name>
    <name type="ordered locus">PFLU_5589</name>
</gene>
<protein>
    <recommendedName>
        <fullName evidence="1">tRNA N6-adenosine threonylcarbamoyltransferase</fullName>
        <ecNumber evidence="1">2.3.1.234</ecNumber>
    </recommendedName>
    <alternativeName>
        <fullName evidence="1">N6-L-threonylcarbamoyladenine synthase</fullName>
        <shortName evidence="1">t(6)A synthase</shortName>
    </alternativeName>
    <alternativeName>
        <fullName evidence="1">t(6)A37 threonylcarbamoyladenosine biosynthesis protein TsaD</fullName>
    </alternativeName>
    <alternativeName>
        <fullName evidence="1">tRNA threonylcarbamoyladenosine biosynthesis protein TsaD</fullName>
    </alternativeName>
</protein>